<feature type="initiator methionine" description="Removed" evidence="1">
    <location>
        <position position="1"/>
    </location>
</feature>
<feature type="chain" id="PRO_0000070778" description="Chaperone protein DnaJ">
    <location>
        <begin position="2"/>
        <end position="376"/>
    </location>
</feature>
<feature type="domain" description="J" evidence="2">
    <location>
        <begin position="5"/>
        <end position="70"/>
    </location>
</feature>
<feature type="repeat" description="CXXCXGXG motif">
    <location>
        <begin position="144"/>
        <end position="151"/>
    </location>
</feature>
<feature type="repeat" description="CXXCXGXG motif">
    <location>
        <begin position="161"/>
        <end position="168"/>
    </location>
</feature>
<feature type="repeat" description="CXXCXGXG motif">
    <location>
        <begin position="183"/>
        <end position="190"/>
    </location>
</feature>
<feature type="repeat" description="CXXCXGXG motif">
    <location>
        <begin position="197"/>
        <end position="204"/>
    </location>
</feature>
<feature type="zinc finger region" description="CR-type" evidence="2">
    <location>
        <begin position="131"/>
        <end position="209"/>
    </location>
</feature>
<feature type="binding site" evidence="2">
    <location>
        <position position="144"/>
    </location>
    <ligand>
        <name>Zn(2+)</name>
        <dbReference type="ChEBI" id="CHEBI:29105"/>
        <label>1</label>
    </ligand>
</feature>
<feature type="binding site" evidence="2">
    <location>
        <position position="147"/>
    </location>
    <ligand>
        <name>Zn(2+)</name>
        <dbReference type="ChEBI" id="CHEBI:29105"/>
        <label>1</label>
    </ligand>
</feature>
<feature type="binding site" evidence="2">
    <location>
        <position position="161"/>
    </location>
    <ligand>
        <name>Zn(2+)</name>
        <dbReference type="ChEBI" id="CHEBI:29105"/>
        <label>2</label>
    </ligand>
</feature>
<feature type="binding site" evidence="2">
    <location>
        <position position="164"/>
    </location>
    <ligand>
        <name>Zn(2+)</name>
        <dbReference type="ChEBI" id="CHEBI:29105"/>
        <label>2</label>
    </ligand>
</feature>
<feature type="binding site" evidence="2">
    <location>
        <position position="183"/>
    </location>
    <ligand>
        <name>Zn(2+)</name>
        <dbReference type="ChEBI" id="CHEBI:29105"/>
        <label>2</label>
    </ligand>
</feature>
<feature type="binding site" evidence="2">
    <location>
        <position position="186"/>
    </location>
    <ligand>
        <name>Zn(2+)</name>
        <dbReference type="ChEBI" id="CHEBI:29105"/>
        <label>2</label>
    </ligand>
</feature>
<feature type="binding site" evidence="2">
    <location>
        <position position="197"/>
    </location>
    <ligand>
        <name>Zn(2+)</name>
        <dbReference type="ChEBI" id="CHEBI:29105"/>
        <label>1</label>
    </ligand>
</feature>
<feature type="binding site" evidence="2">
    <location>
        <position position="200"/>
    </location>
    <ligand>
        <name>Zn(2+)</name>
        <dbReference type="ChEBI" id="CHEBI:29105"/>
        <label>1</label>
    </ligand>
</feature>
<organism>
    <name type="scientific">Escherichia coli O157:H7</name>
    <dbReference type="NCBI Taxonomy" id="83334"/>
    <lineage>
        <taxon>Bacteria</taxon>
        <taxon>Pseudomonadati</taxon>
        <taxon>Pseudomonadota</taxon>
        <taxon>Gammaproteobacteria</taxon>
        <taxon>Enterobacterales</taxon>
        <taxon>Enterobacteriaceae</taxon>
        <taxon>Escherichia</taxon>
    </lineage>
</organism>
<name>DNAJ_ECO57</name>
<accession>Q8XA65</accession>
<accession>Q7AHU4</accession>
<dbReference type="EMBL" id="AE005174">
    <property type="protein sequence ID" value="AAG54315.1"/>
    <property type="molecule type" value="Genomic_DNA"/>
</dbReference>
<dbReference type="EMBL" id="BA000007">
    <property type="protein sequence ID" value="BAB33438.1"/>
    <property type="molecule type" value="Genomic_DNA"/>
</dbReference>
<dbReference type="PIR" id="G85481">
    <property type="entry name" value="G85481"/>
</dbReference>
<dbReference type="PIR" id="G90630">
    <property type="entry name" value="G90630"/>
</dbReference>
<dbReference type="RefSeq" id="NP_308042.1">
    <property type="nucleotide sequence ID" value="NC_002695.1"/>
</dbReference>
<dbReference type="RefSeq" id="WP_001118464.1">
    <property type="nucleotide sequence ID" value="NZ_VOAI01000002.1"/>
</dbReference>
<dbReference type="SMR" id="Q8XA65"/>
<dbReference type="STRING" id="155864.Z0015"/>
<dbReference type="GeneID" id="913407"/>
<dbReference type="GeneID" id="93777428"/>
<dbReference type="KEGG" id="ece:Z0015"/>
<dbReference type="KEGG" id="ecs:ECs_0015"/>
<dbReference type="PATRIC" id="fig|386585.9.peg.111"/>
<dbReference type="eggNOG" id="COG0484">
    <property type="taxonomic scope" value="Bacteria"/>
</dbReference>
<dbReference type="HOGENOM" id="CLU_017633_0_7_6"/>
<dbReference type="OMA" id="MATDYYA"/>
<dbReference type="Proteomes" id="UP000000558">
    <property type="component" value="Chromosome"/>
</dbReference>
<dbReference type="Proteomes" id="UP000002519">
    <property type="component" value="Chromosome"/>
</dbReference>
<dbReference type="GO" id="GO:0005737">
    <property type="term" value="C:cytoplasm"/>
    <property type="evidence" value="ECO:0007669"/>
    <property type="project" value="UniProtKB-SubCell"/>
</dbReference>
<dbReference type="GO" id="GO:0005524">
    <property type="term" value="F:ATP binding"/>
    <property type="evidence" value="ECO:0007669"/>
    <property type="project" value="InterPro"/>
</dbReference>
<dbReference type="GO" id="GO:0031072">
    <property type="term" value="F:heat shock protein binding"/>
    <property type="evidence" value="ECO:0007669"/>
    <property type="project" value="InterPro"/>
</dbReference>
<dbReference type="GO" id="GO:0051082">
    <property type="term" value="F:unfolded protein binding"/>
    <property type="evidence" value="ECO:0007669"/>
    <property type="project" value="UniProtKB-UniRule"/>
</dbReference>
<dbReference type="GO" id="GO:0008270">
    <property type="term" value="F:zinc ion binding"/>
    <property type="evidence" value="ECO:0007669"/>
    <property type="project" value="UniProtKB-UniRule"/>
</dbReference>
<dbReference type="GO" id="GO:0051085">
    <property type="term" value="P:chaperone cofactor-dependent protein refolding"/>
    <property type="evidence" value="ECO:0007669"/>
    <property type="project" value="TreeGrafter"/>
</dbReference>
<dbReference type="GO" id="GO:0006260">
    <property type="term" value="P:DNA replication"/>
    <property type="evidence" value="ECO:0007669"/>
    <property type="project" value="UniProtKB-KW"/>
</dbReference>
<dbReference type="GO" id="GO:0042026">
    <property type="term" value="P:protein refolding"/>
    <property type="evidence" value="ECO:0007669"/>
    <property type="project" value="TreeGrafter"/>
</dbReference>
<dbReference type="GO" id="GO:0009408">
    <property type="term" value="P:response to heat"/>
    <property type="evidence" value="ECO:0007669"/>
    <property type="project" value="InterPro"/>
</dbReference>
<dbReference type="CDD" id="cd06257">
    <property type="entry name" value="DnaJ"/>
    <property type="match status" value="1"/>
</dbReference>
<dbReference type="CDD" id="cd10747">
    <property type="entry name" value="DnaJ_C"/>
    <property type="match status" value="1"/>
</dbReference>
<dbReference type="CDD" id="cd10719">
    <property type="entry name" value="DnaJ_zf"/>
    <property type="match status" value="1"/>
</dbReference>
<dbReference type="FunFam" id="1.10.287.110:FF:000003">
    <property type="entry name" value="Molecular chaperone DnaJ"/>
    <property type="match status" value="1"/>
</dbReference>
<dbReference type="FunFam" id="2.10.230.10:FF:000002">
    <property type="entry name" value="Molecular chaperone DnaJ"/>
    <property type="match status" value="1"/>
</dbReference>
<dbReference type="FunFam" id="2.60.260.20:FF:000004">
    <property type="entry name" value="Molecular chaperone DnaJ"/>
    <property type="match status" value="1"/>
</dbReference>
<dbReference type="Gene3D" id="1.10.287.110">
    <property type="entry name" value="DnaJ domain"/>
    <property type="match status" value="1"/>
</dbReference>
<dbReference type="Gene3D" id="2.10.230.10">
    <property type="entry name" value="Heat shock protein DnaJ, cysteine-rich domain"/>
    <property type="match status" value="1"/>
</dbReference>
<dbReference type="Gene3D" id="2.60.260.20">
    <property type="entry name" value="Urease metallochaperone UreE, N-terminal domain"/>
    <property type="match status" value="2"/>
</dbReference>
<dbReference type="HAMAP" id="MF_01152">
    <property type="entry name" value="DnaJ"/>
    <property type="match status" value="1"/>
</dbReference>
<dbReference type="InterPro" id="IPR012724">
    <property type="entry name" value="DnaJ"/>
</dbReference>
<dbReference type="InterPro" id="IPR002939">
    <property type="entry name" value="DnaJ_C"/>
</dbReference>
<dbReference type="InterPro" id="IPR001623">
    <property type="entry name" value="DnaJ_domain"/>
</dbReference>
<dbReference type="InterPro" id="IPR018253">
    <property type="entry name" value="DnaJ_domain_CS"/>
</dbReference>
<dbReference type="InterPro" id="IPR008971">
    <property type="entry name" value="HSP40/DnaJ_pept-bd"/>
</dbReference>
<dbReference type="InterPro" id="IPR001305">
    <property type="entry name" value="HSP_DnaJ_Cys-rich_dom"/>
</dbReference>
<dbReference type="InterPro" id="IPR036410">
    <property type="entry name" value="HSP_DnaJ_Cys-rich_dom_sf"/>
</dbReference>
<dbReference type="InterPro" id="IPR036869">
    <property type="entry name" value="J_dom_sf"/>
</dbReference>
<dbReference type="NCBIfam" id="TIGR02349">
    <property type="entry name" value="DnaJ_bact"/>
    <property type="match status" value="1"/>
</dbReference>
<dbReference type="NCBIfam" id="NF008035">
    <property type="entry name" value="PRK10767.1"/>
    <property type="match status" value="1"/>
</dbReference>
<dbReference type="PANTHER" id="PTHR43096:SF48">
    <property type="entry name" value="CHAPERONE PROTEIN DNAJ"/>
    <property type="match status" value="1"/>
</dbReference>
<dbReference type="PANTHER" id="PTHR43096">
    <property type="entry name" value="DNAJ HOMOLOG 1, MITOCHONDRIAL-RELATED"/>
    <property type="match status" value="1"/>
</dbReference>
<dbReference type="Pfam" id="PF00226">
    <property type="entry name" value="DnaJ"/>
    <property type="match status" value="1"/>
</dbReference>
<dbReference type="Pfam" id="PF01556">
    <property type="entry name" value="DnaJ_C"/>
    <property type="match status" value="1"/>
</dbReference>
<dbReference type="Pfam" id="PF00684">
    <property type="entry name" value="DnaJ_CXXCXGXG"/>
    <property type="match status" value="1"/>
</dbReference>
<dbReference type="PRINTS" id="PR00625">
    <property type="entry name" value="JDOMAIN"/>
</dbReference>
<dbReference type="SMART" id="SM00271">
    <property type="entry name" value="DnaJ"/>
    <property type="match status" value="1"/>
</dbReference>
<dbReference type="SUPFAM" id="SSF46565">
    <property type="entry name" value="Chaperone J-domain"/>
    <property type="match status" value="1"/>
</dbReference>
<dbReference type="SUPFAM" id="SSF57938">
    <property type="entry name" value="DnaJ/Hsp40 cysteine-rich domain"/>
    <property type="match status" value="1"/>
</dbReference>
<dbReference type="SUPFAM" id="SSF49493">
    <property type="entry name" value="HSP40/DnaJ peptide-binding domain"/>
    <property type="match status" value="2"/>
</dbReference>
<dbReference type="PROSITE" id="PS00636">
    <property type="entry name" value="DNAJ_1"/>
    <property type="match status" value="1"/>
</dbReference>
<dbReference type="PROSITE" id="PS50076">
    <property type="entry name" value="DNAJ_2"/>
    <property type="match status" value="1"/>
</dbReference>
<dbReference type="PROSITE" id="PS51188">
    <property type="entry name" value="ZF_CR"/>
    <property type="match status" value="1"/>
</dbReference>
<comment type="function">
    <text evidence="2">Participates actively in the response to hyperosmotic and heat shock by preventing the aggregation of stress-denatured proteins and by disaggregating proteins, also in an autonomous, DnaK-independent fashion. Unfolded proteins bind initially to DnaJ; upon interaction with the DnaJ-bound protein, DnaK hydrolyzes its bound ATP, resulting in the formation of a stable complex. GrpE releases ADP from DnaK; ATP binding to DnaK triggers the release of the substrate protein, thus completing the reaction cycle. Several rounds of ATP-dependent interactions between DnaJ, DnaK and GrpE are required for fully efficient folding. Also involved, together with DnaK and GrpE, in the DNA replication of plasmids through activation of initiation proteins.</text>
</comment>
<comment type="cofactor">
    <cofactor evidence="2">
        <name>Zn(2+)</name>
        <dbReference type="ChEBI" id="CHEBI:29105"/>
    </cofactor>
    <text evidence="2">Binds 2 Zn(2+) ions per monomer.</text>
</comment>
<comment type="subunit">
    <text evidence="2">Homodimer.</text>
</comment>
<comment type="subcellular location">
    <subcellularLocation>
        <location evidence="2">Cytoplasm</location>
    </subcellularLocation>
</comment>
<comment type="induction">
    <text evidence="1">By heat shock.</text>
</comment>
<comment type="domain">
    <text evidence="2">The J domain is necessary and sufficient to stimulate DnaK ATPase activity. Zinc center 1 plays an important role in the autonomous, DnaK-independent chaperone activity of DnaJ. Zinc center 2 is essential for interaction with DnaK and for DnaJ activity.</text>
</comment>
<comment type="similarity">
    <text evidence="2">Belongs to the DnaJ family.</text>
</comment>
<proteinExistence type="inferred from homology"/>
<keyword id="KW-0143">Chaperone</keyword>
<keyword id="KW-0963">Cytoplasm</keyword>
<keyword id="KW-0235">DNA replication</keyword>
<keyword id="KW-0479">Metal-binding</keyword>
<keyword id="KW-1185">Reference proteome</keyword>
<keyword id="KW-0677">Repeat</keyword>
<keyword id="KW-0346">Stress response</keyword>
<keyword id="KW-0862">Zinc</keyword>
<keyword id="KW-0863">Zinc-finger</keyword>
<gene>
    <name evidence="2" type="primary">dnaJ</name>
    <name type="ordered locus">Z0015</name>
    <name type="ordered locus">ECs0015</name>
</gene>
<reference key="1">
    <citation type="journal article" date="2001" name="Nature">
        <title>Genome sequence of enterohaemorrhagic Escherichia coli O157:H7.</title>
        <authorList>
            <person name="Perna N.T."/>
            <person name="Plunkett G. III"/>
            <person name="Burland V."/>
            <person name="Mau B."/>
            <person name="Glasner J.D."/>
            <person name="Rose D.J."/>
            <person name="Mayhew G.F."/>
            <person name="Evans P.S."/>
            <person name="Gregor J."/>
            <person name="Kirkpatrick H.A."/>
            <person name="Posfai G."/>
            <person name="Hackett J."/>
            <person name="Klink S."/>
            <person name="Boutin A."/>
            <person name="Shao Y."/>
            <person name="Miller L."/>
            <person name="Grotbeck E.J."/>
            <person name="Davis N.W."/>
            <person name="Lim A."/>
            <person name="Dimalanta E.T."/>
            <person name="Potamousis K."/>
            <person name="Apodaca J."/>
            <person name="Anantharaman T.S."/>
            <person name="Lin J."/>
            <person name="Yen G."/>
            <person name="Schwartz D.C."/>
            <person name="Welch R.A."/>
            <person name="Blattner F.R."/>
        </authorList>
    </citation>
    <scope>NUCLEOTIDE SEQUENCE [LARGE SCALE GENOMIC DNA]</scope>
    <source>
        <strain>O157:H7 / EDL933 / ATCC 700927 / EHEC</strain>
    </source>
</reference>
<reference key="2">
    <citation type="journal article" date="2001" name="DNA Res.">
        <title>Complete genome sequence of enterohemorrhagic Escherichia coli O157:H7 and genomic comparison with a laboratory strain K-12.</title>
        <authorList>
            <person name="Hayashi T."/>
            <person name="Makino K."/>
            <person name="Ohnishi M."/>
            <person name="Kurokawa K."/>
            <person name="Ishii K."/>
            <person name="Yokoyama K."/>
            <person name="Han C.-G."/>
            <person name="Ohtsubo E."/>
            <person name="Nakayama K."/>
            <person name="Murata T."/>
            <person name="Tanaka M."/>
            <person name="Tobe T."/>
            <person name="Iida T."/>
            <person name="Takami H."/>
            <person name="Honda T."/>
            <person name="Sasakawa C."/>
            <person name="Ogasawara N."/>
            <person name="Yasunaga T."/>
            <person name="Kuhara S."/>
            <person name="Shiba T."/>
            <person name="Hattori M."/>
            <person name="Shinagawa H."/>
        </authorList>
    </citation>
    <scope>NUCLEOTIDE SEQUENCE [LARGE SCALE GENOMIC DNA]</scope>
    <source>
        <strain>O157:H7 / Sakai / RIMD 0509952 / EHEC</strain>
    </source>
</reference>
<protein>
    <recommendedName>
        <fullName evidence="2">Chaperone protein DnaJ</fullName>
    </recommendedName>
</protein>
<evidence type="ECO:0000250" key="1"/>
<evidence type="ECO:0000255" key="2">
    <source>
        <dbReference type="HAMAP-Rule" id="MF_01152"/>
    </source>
</evidence>
<sequence>MAKQDYYEILGVSKTAEEREIKKAYKRLAMKYHPDRNQGDKEAEAKFKEIKEAYEVLTDSQKRAAYDQYGHAAFEQGGMGGGGFGGGADFSDIFGDVFGDIFGGGRGRQRAARGADLRYNMELTLEEAVRGVTKEIRIPTLEECDVCHGSGAKPGTQPQTCPTCHGSGQVQMRQGFFAVQQTCPHCQGRGTLIKDPCNKCHGHGRVERSKTLSVKIPAGVDTGDRIRLAGEGEAGEHGAPAGDLYVQVQVKQHPIFEREGNNLYCEVPINFAMAALGGEIEVPTLDGRVKLKVPGETQTGKLFRMRGKGVKSVRGGAQGDLLCRVVVETPVGLNEKQKQLLQELQESFGGPTGEHNSPRSKSFFDGVKKFFDDLTR</sequence>